<reference key="1">
    <citation type="journal article" date="1989" name="Antimicrob. Agents Chemother.">
        <title>Chromosomal beta-lactamase of Klebsiella oxytoca, a new class A enzyme that hydrolyzes broad-spectrum beta-lactam antibiotics.</title>
        <authorList>
            <person name="Arakawa Y."/>
            <person name="Ohta M."/>
            <person name="Kido N."/>
            <person name="Mori M."/>
            <person name="Ito H."/>
            <person name="Komatsu T."/>
            <person name="Fujii Y."/>
            <person name="Kato N."/>
        </authorList>
    </citation>
    <scope>NUCLEOTIDE SEQUENCE [GENOMIC DNA]</scope>
    <source>
        <strain>E23004</strain>
    </source>
</reference>
<reference key="2">
    <citation type="journal article" date="1994" name="FEMS Microbiol. Lett.">
        <title>Klebsiella oxytoca: resistance to aztreonam by overproduction of the chromosomally encoded beta-lactamase.</title>
        <authorList>
            <person name="Fournier B."/>
            <person name="Arlet G."/>
            <person name="Lagrange P.H."/>
            <person name="Philippon A."/>
        </authorList>
    </citation>
    <scope>NUCLEOTIDE SEQUENCE [GENOMIC DNA]</scope>
    <source>
        <strain>SL781</strain>
        <strain>SL7811</strain>
    </source>
</reference>
<reference key="3">
    <citation type="journal article" date="1999" name="Antimicrob. Agents Chemother.">
        <title>Genetic characterization of resistance to extended-spectrum beta-lactams in Klebsiella oxytoca isolates recovered from patients with septicemia at hospitals in the Stockholm area.</title>
        <authorList>
            <person name="Wu S.W."/>
            <person name="Dornbusch K."/>
            <person name="Kronvall G."/>
        </authorList>
    </citation>
    <scope>NUCLEOTIDE SEQUENCE [GENOMIC DNA]</scope>
    <source>
        <strain>KH66</strain>
    </source>
</reference>
<reference key="4">
    <citation type="journal article" date="1991" name="Biochem. J.">
        <title>A standard numbering scheme for the class A beta-lactamases.</title>
        <authorList>
            <person name="Ambler R.P."/>
            <person name="Coulson A.F."/>
            <person name="Frere J.M."/>
            <person name="Ghuysen J.M."/>
            <person name="Joris B."/>
            <person name="Forsman M."/>
            <person name="Levesque R.C."/>
            <person name="Tiraby G."/>
            <person name="Waley S.G."/>
        </authorList>
    </citation>
    <scope>AMINO ACID NUMBERING SCHEME</scope>
</reference>
<proteinExistence type="evidence at protein level"/>
<evidence type="ECO:0000250" key="1"/>
<evidence type="ECO:0000255" key="2">
    <source>
        <dbReference type="PROSITE-ProRule" id="PRU10101"/>
    </source>
</evidence>
<evidence type="ECO:0000305" key="3"/>
<evidence type="ECO:0000305" key="4">
    <source>
    </source>
</evidence>
<evidence type="ECO:0007829" key="5">
    <source>
        <dbReference type="PDB" id="3BYD"/>
    </source>
</evidence>
<accession>P22391</accession>
<accession>Q9S6S0</accession>
<name>BLO1_KLEOX</name>
<dbReference type="EC" id="3.5.2.6"/>
<dbReference type="EMBL" id="M27459">
    <property type="protein sequence ID" value="AAA25084.1"/>
    <property type="molecule type" value="Genomic_DNA"/>
</dbReference>
<dbReference type="EMBL" id="Z30177">
    <property type="protein sequence ID" value="CAA82916.1"/>
    <property type="molecule type" value="Genomic_DNA"/>
</dbReference>
<dbReference type="EMBL" id="Z30178">
    <property type="protein sequence ID" value="CAA82917.1"/>
    <property type="molecule type" value="Genomic_DNA"/>
</dbReference>
<dbReference type="EMBL" id="Y17715">
    <property type="protein sequence ID" value="CAB42615.1"/>
    <property type="molecule type" value="Genomic_DNA"/>
</dbReference>
<dbReference type="PIR" id="S42075">
    <property type="entry name" value="S42075"/>
</dbReference>
<dbReference type="PDB" id="3BYD">
    <property type="method" value="X-ray"/>
    <property type="resolution" value="1.93 A"/>
    <property type="chains" value="A=25-291"/>
</dbReference>
<dbReference type="PDBsum" id="3BYD"/>
<dbReference type="SMR" id="P22391"/>
<dbReference type="STRING" id="571.AB185_28800"/>
<dbReference type="CARD" id="ARO:3002389">
    <property type="molecule name" value="OXY-1-1"/>
    <property type="mechanism identifier" value="ARO:0001004"/>
    <property type="mechanism name" value="antibiotic inactivation"/>
</dbReference>
<dbReference type="KEGG" id="ag:AAA25084"/>
<dbReference type="KEGG" id="ag:CAB42615"/>
<dbReference type="eggNOG" id="COG2367">
    <property type="taxonomic scope" value="Bacteria"/>
</dbReference>
<dbReference type="EvolutionaryTrace" id="P22391"/>
<dbReference type="GO" id="GO:0008800">
    <property type="term" value="F:beta-lactamase activity"/>
    <property type="evidence" value="ECO:0007669"/>
    <property type="project" value="UniProtKB-EC"/>
</dbReference>
<dbReference type="GO" id="GO:0030655">
    <property type="term" value="P:beta-lactam antibiotic catabolic process"/>
    <property type="evidence" value="ECO:0007669"/>
    <property type="project" value="InterPro"/>
</dbReference>
<dbReference type="GO" id="GO:0046677">
    <property type="term" value="P:response to antibiotic"/>
    <property type="evidence" value="ECO:0007669"/>
    <property type="project" value="UniProtKB-KW"/>
</dbReference>
<dbReference type="Gene3D" id="3.40.710.10">
    <property type="entry name" value="DD-peptidase/beta-lactamase superfamily"/>
    <property type="match status" value="1"/>
</dbReference>
<dbReference type="InterPro" id="IPR012338">
    <property type="entry name" value="Beta-lactam/transpept-like"/>
</dbReference>
<dbReference type="InterPro" id="IPR045155">
    <property type="entry name" value="Beta-lactam_cat"/>
</dbReference>
<dbReference type="InterPro" id="IPR000871">
    <property type="entry name" value="Beta-lactam_class-A"/>
</dbReference>
<dbReference type="InterPro" id="IPR023650">
    <property type="entry name" value="Beta-lactam_class-A_AS"/>
</dbReference>
<dbReference type="NCBIfam" id="NF033103">
    <property type="entry name" value="bla_class_A"/>
    <property type="match status" value="1"/>
</dbReference>
<dbReference type="NCBIfam" id="NF000271">
    <property type="entry name" value="blaOXY"/>
    <property type="match status" value="1"/>
</dbReference>
<dbReference type="PANTHER" id="PTHR35333">
    <property type="entry name" value="BETA-LACTAMASE"/>
    <property type="match status" value="1"/>
</dbReference>
<dbReference type="PANTHER" id="PTHR35333:SF3">
    <property type="entry name" value="BETA-LACTAMASE-TYPE TRANSPEPTIDASE FOLD CONTAINING PROTEIN"/>
    <property type="match status" value="1"/>
</dbReference>
<dbReference type="Pfam" id="PF13354">
    <property type="entry name" value="Beta-lactamase2"/>
    <property type="match status" value="1"/>
</dbReference>
<dbReference type="PRINTS" id="PR00118">
    <property type="entry name" value="BLACTAMASEA"/>
</dbReference>
<dbReference type="SUPFAM" id="SSF56601">
    <property type="entry name" value="beta-lactamase/transpeptidase-like"/>
    <property type="match status" value="1"/>
</dbReference>
<dbReference type="PROSITE" id="PS00146">
    <property type="entry name" value="BETA_LACTAMASE_A"/>
    <property type="match status" value="1"/>
</dbReference>
<organism>
    <name type="scientific">Klebsiella oxytoca</name>
    <dbReference type="NCBI Taxonomy" id="571"/>
    <lineage>
        <taxon>Bacteria</taxon>
        <taxon>Pseudomonadati</taxon>
        <taxon>Pseudomonadota</taxon>
        <taxon>Gammaproteobacteria</taxon>
        <taxon>Enterobacterales</taxon>
        <taxon>Enterobacteriaceae</taxon>
        <taxon>Klebsiella/Raoultella group</taxon>
        <taxon>Klebsiella</taxon>
    </lineage>
</organism>
<protein>
    <recommendedName>
        <fullName>Beta-lactamase OXY-1</fullName>
        <ecNumber>3.5.2.6</ecNumber>
    </recommendedName>
    <alternativeName>
        <fullName>Penicillinase</fullName>
    </alternativeName>
</protein>
<keyword id="KW-0002">3D-structure</keyword>
<keyword id="KW-0046">Antibiotic resistance</keyword>
<keyword id="KW-0378">Hydrolase</keyword>
<keyword id="KW-0732">Signal</keyword>
<sequence>MLKSSWRKTALMAAAAVPLLLASGSLWASADAIQQKLADLEKRSGGRLGVALINTADDSQTLYRGDERFAMCSTGKVMAAAAVLKQSESNPEVVNKRLEIKKSDLVVWSPITEKHLQSGMTLAELSAAALQYSDNTAMNKMISYLGGPEKVTAFAQSIGDVTFRLDRTEPALNSAIPGDKRDTTTPLAMAESLRKLTLGNALGEQQRAQLVTWLKGNTTGGQSIRAGLPASWAVGDKTGAGDYGTTNDIAVIWPENHAPLVLVTYFTQPQQDAKSRKEVLAAAAKIVTEGL</sequence>
<gene>
    <name type="primary">bla</name>
</gene>
<comment type="function">
    <text>Hydrolyzes broad-spectrum beta-lactam antibiotics. Active against cephalosporins.</text>
</comment>
<comment type="catalytic activity">
    <reaction evidence="2">
        <text>a beta-lactam + H2O = a substituted beta-amino acid</text>
        <dbReference type="Rhea" id="RHEA:20401"/>
        <dbReference type="ChEBI" id="CHEBI:15377"/>
        <dbReference type="ChEBI" id="CHEBI:35627"/>
        <dbReference type="ChEBI" id="CHEBI:140347"/>
        <dbReference type="EC" id="3.5.2.6"/>
    </reaction>
</comment>
<comment type="miscellaneous">
    <text>In strain KH66 OXY-1 is known as OXY-1a.</text>
</comment>
<comment type="miscellaneous">
    <text evidence="4">The class A beta-lactamase family has a specific amino-acid numbering system, sometimes called Ambler or ABL numbering and often misspelt as Amber. A multiple sequence alignment was used to derive a consensus sequence and then the consensus was numbered taking into account insertions and deletions. This allows use of identical numbers, e.g. for active site residues, despite differences in protein length. UniProt always uses natural numbering of residues, hence there appear to be differences in numbering between this entry and some papers.</text>
</comment>
<comment type="similarity">
    <text evidence="3">Belongs to the class-A beta-lactamase family.</text>
</comment>
<feature type="signal peptide">
    <location>
        <begin position="1"/>
        <end position="24"/>
    </location>
</feature>
<feature type="chain" id="PRO_0000016997" description="Beta-lactamase OXY-1">
    <location>
        <begin position="25"/>
        <end position="291"/>
    </location>
</feature>
<feature type="active site" description="Acyl-ester intermediate" evidence="2">
    <location>
        <position position="73"/>
    </location>
</feature>
<feature type="binding site" evidence="1">
    <location>
        <begin position="237"/>
        <end position="239"/>
    </location>
    <ligand>
        <name>substrate</name>
    </ligand>
</feature>
<feature type="sequence variant" description="In strain: KH66.">
    <original>L</original>
    <variation>P</variation>
    <location>
        <position position="262"/>
    </location>
</feature>
<feature type="sequence variant" description="In strain: KH66.">
    <original>E</original>
    <variation>K</variation>
    <location>
        <position position="278"/>
    </location>
</feature>
<feature type="helix" evidence="5">
    <location>
        <begin position="32"/>
        <end position="44"/>
    </location>
</feature>
<feature type="strand" evidence="5">
    <location>
        <begin position="46"/>
        <end position="54"/>
    </location>
</feature>
<feature type="turn" evidence="5">
    <location>
        <begin position="55"/>
        <end position="57"/>
    </location>
</feature>
<feature type="strand" evidence="5">
    <location>
        <begin position="60"/>
        <end position="64"/>
    </location>
</feature>
<feature type="helix" evidence="5">
    <location>
        <begin position="72"/>
        <end position="75"/>
    </location>
</feature>
<feature type="helix" evidence="5">
    <location>
        <begin position="76"/>
        <end position="89"/>
    </location>
</feature>
<feature type="strand" evidence="5">
    <location>
        <begin position="91"/>
        <end position="93"/>
    </location>
</feature>
<feature type="helix" evidence="5">
    <location>
        <begin position="102"/>
        <end position="104"/>
    </location>
</feature>
<feature type="helix" evidence="5">
    <location>
        <begin position="112"/>
        <end position="114"/>
    </location>
</feature>
<feature type="turn" evidence="5">
    <location>
        <begin position="116"/>
        <end position="118"/>
    </location>
</feature>
<feature type="helix" evidence="5">
    <location>
        <begin position="122"/>
        <end position="131"/>
    </location>
</feature>
<feature type="helix" evidence="5">
    <location>
        <begin position="135"/>
        <end position="145"/>
    </location>
</feature>
<feature type="helix" evidence="5">
    <location>
        <begin position="148"/>
        <end position="157"/>
    </location>
</feature>
<feature type="helix" evidence="5">
    <location>
        <begin position="171"/>
        <end position="173"/>
    </location>
</feature>
<feature type="helix" evidence="5">
    <location>
        <begin position="186"/>
        <end position="197"/>
    </location>
</feature>
<feature type="strand" evidence="5">
    <location>
        <begin position="199"/>
        <end position="202"/>
    </location>
</feature>
<feature type="helix" evidence="5">
    <location>
        <begin position="204"/>
        <end position="215"/>
    </location>
</feature>
<feature type="turn" evidence="5">
    <location>
        <begin position="221"/>
        <end position="223"/>
    </location>
</feature>
<feature type="helix" evidence="5">
    <location>
        <begin position="224"/>
        <end position="227"/>
    </location>
</feature>
<feature type="strand" evidence="5">
    <location>
        <begin position="232"/>
        <end position="241"/>
    </location>
</feature>
<feature type="turn" evidence="5">
    <location>
        <begin position="242"/>
        <end position="244"/>
    </location>
</feature>
<feature type="strand" evidence="5">
    <location>
        <begin position="245"/>
        <end position="253"/>
    </location>
</feature>
<feature type="strand" evidence="5">
    <location>
        <begin position="255"/>
        <end position="257"/>
    </location>
</feature>
<feature type="strand" evidence="5">
    <location>
        <begin position="260"/>
        <end position="267"/>
    </location>
</feature>
<feature type="helix" evidence="5">
    <location>
        <begin position="277"/>
        <end position="288"/>
    </location>
</feature>